<protein>
    <recommendedName>
        <fullName evidence="1">Phosphate import ATP-binding protein PstB 2</fullName>
        <ecNumber evidence="1">7.3.2.1</ecNumber>
    </recommendedName>
    <alternativeName>
        <fullName evidence="1">ABC phosphate transporter 2</fullName>
    </alternativeName>
    <alternativeName>
        <fullName evidence="1">Phosphate-transporting ATPase 2</fullName>
    </alternativeName>
</protein>
<gene>
    <name evidence="1" type="primary">pstB2</name>
    <name type="ordered locus">LJ_0793</name>
</gene>
<accession>Q74KF8</accession>
<evidence type="ECO:0000255" key="1">
    <source>
        <dbReference type="HAMAP-Rule" id="MF_01702"/>
    </source>
</evidence>
<feature type="chain" id="PRO_0000092823" description="Phosphate import ATP-binding protein PstB 2">
    <location>
        <begin position="1"/>
        <end position="251"/>
    </location>
</feature>
<feature type="domain" description="ABC transporter" evidence="1">
    <location>
        <begin position="5"/>
        <end position="246"/>
    </location>
</feature>
<feature type="binding site" evidence="1">
    <location>
        <begin position="37"/>
        <end position="44"/>
    </location>
    <ligand>
        <name>ATP</name>
        <dbReference type="ChEBI" id="CHEBI:30616"/>
    </ligand>
</feature>
<sequence>MENIITSKDVHLSYGNVEALHGISLDFEEKELTALIGPSGCGKSTFLRCLNRMNDDIPNIHISGEIKFENKNIYGPKMDLVELRKDVGMVFQQPSPFPFSVYDNIAYGLRIAGIKDKELIDQRVEESLKQAAIWKETKDNLDRNAQAFSGGQQQRICIARALAVRPKVVLLDEPTSALDPISSSEIEETLLELKHDFTFIMVTHNLQQASRISDYTAFLMSGDLIEYGKTSDMFMNPKKQITSDYLNGRFG</sequence>
<name>PSTB2_LACJO</name>
<comment type="function">
    <text evidence="1">Part of the ABC transporter complex PstSACB involved in phosphate import. Responsible for energy coupling to the transport system.</text>
</comment>
<comment type="catalytic activity">
    <reaction evidence="1">
        <text>phosphate(out) + ATP + H2O = ADP + 2 phosphate(in) + H(+)</text>
        <dbReference type="Rhea" id="RHEA:24440"/>
        <dbReference type="ChEBI" id="CHEBI:15377"/>
        <dbReference type="ChEBI" id="CHEBI:15378"/>
        <dbReference type="ChEBI" id="CHEBI:30616"/>
        <dbReference type="ChEBI" id="CHEBI:43474"/>
        <dbReference type="ChEBI" id="CHEBI:456216"/>
        <dbReference type="EC" id="7.3.2.1"/>
    </reaction>
</comment>
<comment type="subunit">
    <text evidence="1">The complex is composed of two ATP-binding proteins (PstB), two transmembrane proteins (PstC and PstA) and a solute-binding protein (PstS).</text>
</comment>
<comment type="subcellular location">
    <subcellularLocation>
        <location evidence="1">Cell membrane</location>
        <topology evidence="1">Peripheral membrane protein</topology>
    </subcellularLocation>
</comment>
<comment type="similarity">
    <text evidence="1">Belongs to the ABC transporter superfamily. Phosphate importer (TC 3.A.1.7) family.</text>
</comment>
<proteinExistence type="inferred from homology"/>
<dbReference type="EC" id="7.3.2.1" evidence="1"/>
<dbReference type="EMBL" id="AE017198">
    <property type="protein sequence ID" value="AAS08614.1"/>
    <property type="molecule type" value="Genomic_DNA"/>
</dbReference>
<dbReference type="SMR" id="Q74KF8"/>
<dbReference type="KEGG" id="ljo:LJ_0793"/>
<dbReference type="eggNOG" id="COG1117">
    <property type="taxonomic scope" value="Bacteria"/>
</dbReference>
<dbReference type="HOGENOM" id="CLU_000604_1_22_9"/>
<dbReference type="Proteomes" id="UP000000581">
    <property type="component" value="Chromosome"/>
</dbReference>
<dbReference type="GO" id="GO:0005886">
    <property type="term" value="C:plasma membrane"/>
    <property type="evidence" value="ECO:0007669"/>
    <property type="project" value="UniProtKB-SubCell"/>
</dbReference>
<dbReference type="GO" id="GO:0005524">
    <property type="term" value="F:ATP binding"/>
    <property type="evidence" value="ECO:0007669"/>
    <property type="project" value="UniProtKB-KW"/>
</dbReference>
<dbReference type="GO" id="GO:0016887">
    <property type="term" value="F:ATP hydrolysis activity"/>
    <property type="evidence" value="ECO:0007669"/>
    <property type="project" value="InterPro"/>
</dbReference>
<dbReference type="GO" id="GO:0015415">
    <property type="term" value="F:ATPase-coupled phosphate ion transmembrane transporter activity"/>
    <property type="evidence" value="ECO:0007669"/>
    <property type="project" value="UniProtKB-EC"/>
</dbReference>
<dbReference type="GO" id="GO:0035435">
    <property type="term" value="P:phosphate ion transmembrane transport"/>
    <property type="evidence" value="ECO:0007669"/>
    <property type="project" value="InterPro"/>
</dbReference>
<dbReference type="CDD" id="cd03260">
    <property type="entry name" value="ABC_PstB_phosphate_transporter"/>
    <property type="match status" value="1"/>
</dbReference>
<dbReference type="Gene3D" id="3.40.50.300">
    <property type="entry name" value="P-loop containing nucleotide triphosphate hydrolases"/>
    <property type="match status" value="1"/>
</dbReference>
<dbReference type="InterPro" id="IPR003593">
    <property type="entry name" value="AAA+_ATPase"/>
</dbReference>
<dbReference type="InterPro" id="IPR003439">
    <property type="entry name" value="ABC_transporter-like_ATP-bd"/>
</dbReference>
<dbReference type="InterPro" id="IPR017871">
    <property type="entry name" value="ABC_transporter-like_CS"/>
</dbReference>
<dbReference type="InterPro" id="IPR027417">
    <property type="entry name" value="P-loop_NTPase"/>
</dbReference>
<dbReference type="InterPro" id="IPR005670">
    <property type="entry name" value="PstB-like"/>
</dbReference>
<dbReference type="NCBIfam" id="TIGR00972">
    <property type="entry name" value="3a0107s01c2"/>
    <property type="match status" value="1"/>
</dbReference>
<dbReference type="PANTHER" id="PTHR43423">
    <property type="entry name" value="ABC TRANSPORTER I FAMILY MEMBER 17"/>
    <property type="match status" value="1"/>
</dbReference>
<dbReference type="PANTHER" id="PTHR43423:SF1">
    <property type="entry name" value="ABC TRANSPORTER I FAMILY MEMBER 17"/>
    <property type="match status" value="1"/>
</dbReference>
<dbReference type="Pfam" id="PF00005">
    <property type="entry name" value="ABC_tran"/>
    <property type="match status" value="1"/>
</dbReference>
<dbReference type="SMART" id="SM00382">
    <property type="entry name" value="AAA"/>
    <property type="match status" value="1"/>
</dbReference>
<dbReference type="SUPFAM" id="SSF52540">
    <property type="entry name" value="P-loop containing nucleoside triphosphate hydrolases"/>
    <property type="match status" value="1"/>
</dbReference>
<dbReference type="PROSITE" id="PS00211">
    <property type="entry name" value="ABC_TRANSPORTER_1"/>
    <property type="match status" value="1"/>
</dbReference>
<dbReference type="PROSITE" id="PS50893">
    <property type="entry name" value="ABC_TRANSPORTER_2"/>
    <property type="match status" value="1"/>
</dbReference>
<dbReference type="PROSITE" id="PS51238">
    <property type="entry name" value="PSTB"/>
    <property type="match status" value="1"/>
</dbReference>
<organism>
    <name type="scientific">Lactobacillus johnsonii (strain CNCM I-12250 / La1 / NCC 533)</name>
    <dbReference type="NCBI Taxonomy" id="257314"/>
    <lineage>
        <taxon>Bacteria</taxon>
        <taxon>Bacillati</taxon>
        <taxon>Bacillota</taxon>
        <taxon>Bacilli</taxon>
        <taxon>Lactobacillales</taxon>
        <taxon>Lactobacillaceae</taxon>
        <taxon>Lactobacillus</taxon>
    </lineage>
</organism>
<keyword id="KW-0067">ATP-binding</keyword>
<keyword id="KW-1003">Cell membrane</keyword>
<keyword id="KW-0472">Membrane</keyword>
<keyword id="KW-0547">Nucleotide-binding</keyword>
<keyword id="KW-0592">Phosphate transport</keyword>
<keyword id="KW-1278">Translocase</keyword>
<keyword id="KW-0813">Transport</keyword>
<reference key="1">
    <citation type="journal article" date="2004" name="Proc. Natl. Acad. Sci. U.S.A.">
        <title>The genome sequence of the probiotic intestinal bacterium Lactobacillus johnsonii NCC 533.</title>
        <authorList>
            <person name="Pridmore R.D."/>
            <person name="Berger B."/>
            <person name="Desiere F."/>
            <person name="Vilanova D."/>
            <person name="Barretto C."/>
            <person name="Pittet A.-C."/>
            <person name="Zwahlen M.-C."/>
            <person name="Rouvet M."/>
            <person name="Altermann E."/>
            <person name="Barrangou R."/>
            <person name="Mollet B."/>
            <person name="Mercenier A."/>
            <person name="Klaenhammer T."/>
            <person name="Arigoni F."/>
            <person name="Schell M.A."/>
        </authorList>
    </citation>
    <scope>NUCLEOTIDE SEQUENCE [LARGE SCALE GENOMIC DNA]</scope>
    <source>
        <strain>CNCM I-1225 / La1 / NCC 533</strain>
    </source>
</reference>